<keyword id="KW-0004">4Fe-4S</keyword>
<keyword id="KW-0028">Amino-acid biosynthesis</keyword>
<keyword id="KW-0198">Cysteine biosynthesis</keyword>
<keyword id="KW-0349">Heme</keyword>
<keyword id="KW-0408">Iron</keyword>
<keyword id="KW-0411">Iron-sulfur</keyword>
<keyword id="KW-0479">Metal-binding</keyword>
<keyword id="KW-0521">NADP</keyword>
<keyword id="KW-0560">Oxidoreductase</keyword>
<proteinExistence type="inferred from homology"/>
<dbReference type="EC" id="1.8.1.2" evidence="1"/>
<dbReference type="EMBL" id="CP000653">
    <property type="protein sequence ID" value="ABP61890.1"/>
    <property type="molecule type" value="Genomic_DNA"/>
</dbReference>
<dbReference type="RefSeq" id="WP_015960219.1">
    <property type="nucleotide sequence ID" value="NC_009436.1"/>
</dbReference>
<dbReference type="SMR" id="A4WDW0"/>
<dbReference type="STRING" id="399742.Ent638_3226"/>
<dbReference type="GeneID" id="93306184"/>
<dbReference type="KEGG" id="ent:Ent638_3226"/>
<dbReference type="eggNOG" id="COG0155">
    <property type="taxonomic scope" value="Bacteria"/>
</dbReference>
<dbReference type="HOGENOM" id="CLU_001975_3_2_6"/>
<dbReference type="OrthoDB" id="3189055at2"/>
<dbReference type="UniPathway" id="UPA00140">
    <property type="reaction ID" value="UER00207"/>
</dbReference>
<dbReference type="Proteomes" id="UP000000230">
    <property type="component" value="Chromosome"/>
</dbReference>
<dbReference type="GO" id="GO:0009337">
    <property type="term" value="C:sulfite reductase complex (NADPH)"/>
    <property type="evidence" value="ECO:0007669"/>
    <property type="project" value="InterPro"/>
</dbReference>
<dbReference type="GO" id="GO:0051539">
    <property type="term" value="F:4 iron, 4 sulfur cluster binding"/>
    <property type="evidence" value="ECO:0007669"/>
    <property type="project" value="UniProtKB-KW"/>
</dbReference>
<dbReference type="GO" id="GO:0020037">
    <property type="term" value="F:heme binding"/>
    <property type="evidence" value="ECO:0007669"/>
    <property type="project" value="InterPro"/>
</dbReference>
<dbReference type="GO" id="GO:0046872">
    <property type="term" value="F:metal ion binding"/>
    <property type="evidence" value="ECO:0007669"/>
    <property type="project" value="UniProtKB-KW"/>
</dbReference>
<dbReference type="GO" id="GO:0050661">
    <property type="term" value="F:NADP binding"/>
    <property type="evidence" value="ECO:0007669"/>
    <property type="project" value="InterPro"/>
</dbReference>
<dbReference type="GO" id="GO:0050311">
    <property type="term" value="F:sulfite reductase (ferredoxin) activity"/>
    <property type="evidence" value="ECO:0007669"/>
    <property type="project" value="TreeGrafter"/>
</dbReference>
<dbReference type="GO" id="GO:0004783">
    <property type="term" value="F:sulfite reductase (NADPH) activity"/>
    <property type="evidence" value="ECO:0007669"/>
    <property type="project" value="UniProtKB-UniRule"/>
</dbReference>
<dbReference type="GO" id="GO:0019344">
    <property type="term" value="P:cysteine biosynthetic process"/>
    <property type="evidence" value="ECO:0007669"/>
    <property type="project" value="UniProtKB-KW"/>
</dbReference>
<dbReference type="GO" id="GO:0070814">
    <property type="term" value="P:hydrogen sulfide biosynthetic process"/>
    <property type="evidence" value="ECO:0007669"/>
    <property type="project" value="UniProtKB-UniRule"/>
</dbReference>
<dbReference type="GO" id="GO:0000103">
    <property type="term" value="P:sulfate assimilation"/>
    <property type="evidence" value="ECO:0007669"/>
    <property type="project" value="UniProtKB-UniRule"/>
</dbReference>
<dbReference type="FunFam" id="3.30.413.10:FF:000003">
    <property type="entry name" value="Sulfite reductase [NADPH] hemoprotein beta-component"/>
    <property type="match status" value="1"/>
</dbReference>
<dbReference type="FunFam" id="3.30.413.10:FF:000004">
    <property type="entry name" value="Sulfite reductase [NADPH] hemoprotein beta-component"/>
    <property type="match status" value="1"/>
</dbReference>
<dbReference type="Gene3D" id="3.30.413.10">
    <property type="entry name" value="Sulfite Reductase Hemoprotein, domain 1"/>
    <property type="match status" value="2"/>
</dbReference>
<dbReference type="HAMAP" id="MF_01540">
    <property type="entry name" value="CysI"/>
    <property type="match status" value="1"/>
</dbReference>
<dbReference type="InterPro" id="IPR011786">
    <property type="entry name" value="CysI"/>
</dbReference>
<dbReference type="InterPro" id="IPR005117">
    <property type="entry name" value="NiRdtase/SiRdtase_haem-b_fer"/>
</dbReference>
<dbReference type="InterPro" id="IPR036136">
    <property type="entry name" value="Nit/Sulf_reduc_fer-like_dom_sf"/>
</dbReference>
<dbReference type="InterPro" id="IPR006067">
    <property type="entry name" value="NO2/SO3_Rdtase_4Fe4S_dom"/>
</dbReference>
<dbReference type="InterPro" id="IPR045169">
    <property type="entry name" value="NO2/SO3_Rdtase_4Fe4S_prot"/>
</dbReference>
<dbReference type="InterPro" id="IPR045854">
    <property type="entry name" value="NO2/SO3_Rdtase_4Fe4S_sf"/>
</dbReference>
<dbReference type="InterPro" id="IPR006066">
    <property type="entry name" value="NO2/SO3_Rdtase_FeS/sirohaem_BS"/>
</dbReference>
<dbReference type="NCBIfam" id="TIGR02041">
    <property type="entry name" value="CysI"/>
    <property type="match status" value="1"/>
</dbReference>
<dbReference type="NCBIfam" id="NF010029">
    <property type="entry name" value="PRK13504.1"/>
    <property type="match status" value="1"/>
</dbReference>
<dbReference type="PANTHER" id="PTHR11493:SF47">
    <property type="entry name" value="SULFITE REDUCTASE [NADPH] SUBUNIT BETA"/>
    <property type="match status" value="1"/>
</dbReference>
<dbReference type="PANTHER" id="PTHR11493">
    <property type="entry name" value="SULFITE REDUCTASE [NADPH] SUBUNIT BETA-RELATED"/>
    <property type="match status" value="1"/>
</dbReference>
<dbReference type="Pfam" id="PF01077">
    <property type="entry name" value="NIR_SIR"/>
    <property type="match status" value="1"/>
</dbReference>
<dbReference type="Pfam" id="PF03460">
    <property type="entry name" value="NIR_SIR_ferr"/>
    <property type="match status" value="2"/>
</dbReference>
<dbReference type="PRINTS" id="PR00397">
    <property type="entry name" value="SIROHAEM"/>
</dbReference>
<dbReference type="SUPFAM" id="SSF56014">
    <property type="entry name" value="Nitrite and sulphite reductase 4Fe-4S domain-like"/>
    <property type="match status" value="2"/>
</dbReference>
<dbReference type="SUPFAM" id="SSF55124">
    <property type="entry name" value="Nitrite/Sulfite reductase N-terminal domain-like"/>
    <property type="match status" value="2"/>
</dbReference>
<dbReference type="PROSITE" id="PS00365">
    <property type="entry name" value="NIR_SIR"/>
    <property type="match status" value="1"/>
</dbReference>
<sequence length="570" mass="64091">MSEKHPGPLVVEGKLTDAERMKVDSNYLRGTIAEDLNDGLTGGFKGDNFLLIRFHGMYQQDDRDIRAERAEQKLEPRHAMLLRCRLPGGVITTKQWQAIDKFAHDNTIYGSIRLTNRQTFQFHGILKKNVKPVHQMLHSVGLDALATANDMNRNVLCTSNPYESELHAEAYEWAKKISEHLLPRTRAYAEIWLDQEKVATTDVEPILGQTYLPRKFKTTVVIPPQNDIDLHANDMNFVAIAENGKLVGFNLLVGGGLSIEHGNKKTYARTASEFGYIPLEHTLAVAEAVVTTQRDWGNRTDRKNAKTKYTLERVGVETFKAEVERRAGITFEPIRAYEFTGRGDRIGWVKGIDNKWHLTLFIENGRILDYPGRPLKTGLLEIAKIHKGEFRITANQNLIIAGVPESQKAKIEKLAREHTLMDGVKPQRENSMACVSFPTCPLAMAEAERFLPSFTDKVEAVLAKHGIPDEHIVMRVTGCPNGCGRALLAELGLVGKAPGRYNVHLGGNRSGTRIPRMYRENITEPEILDSLDELVGRWAKEREAGEGFGDFTVRAGIIRPVLDPARDFWE</sequence>
<feature type="chain" id="PRO_1000068763" description="Sulfite reductase [NADPH] hemoprotein beta-component">
    <location>
        <begin position="1"/>
        <end position="570"/>
    </location>
</feature>
<feature type="binding site" evidence="1">
    <location>
        <position position="434"/>
    </location>
    <ligand>
        <name>[4Fe-4S] cluster</name>
        <dbReference type="ChEBI" id="CHEBI:49883"/>
    </ligand>
</feature>
<feature type="binding site" evidence="1">
    <location>
        <position position="440"/>
    </location>
    <ligand>
        <name>[4Fe-4S] cluster</name>
        <dbReference type="ChEBI" id="CHEBI:49883"/>
    </ligand>
</feature>
<feature type="binding site" evidence="1">
    <location>
        <position position="479"/>
    </location>
    <ligand>
        <name>[4Fe-4S] cluster</name>
        <dbReference type="ChEBI" id="CHEBI:49883"/>
    </ligand>
</feature>
<feature type="binding site" evidence="1">
    <location>
        <position position="483"/>
    </location>
    <ligand>
        <name>[4Fe-4S] cluster</name>
        <dbReference type="ChEBI" id="CHEBI:49883"/>
    </ligand>
</feature>
<feature type="binding site" description="axial binding residue" evidence="1">
    <location>
        <position position="483"/>
    </location>
    <ligand>
        <name>siroheme</name>
        <dbReference type="ChEBI" id="CHEBI:60052"/>
    </ligand>
    <ligandPart>
        <name>Fe</name>
        <dbReference type="ChEBI" id="CHEBI:18248"/>
    </ligandPart>
</feature>
<reference key="1">
    <citation type="journal article" date="2010" name="PLoS Genet.">
        <title>Genome sequence of the plant growth promoting endophytic bacterium Enterobacter sp. 638.</title>
        <authorList>
            <person name="Taghavi S."/>
            <person name="van der Lelie D."/>
            <person name="Hoffman A."/>
            <person name="Zhang Y.B."/>
            <person name="Walla M.D."/>
            <person name="Vangronsveld J."/>
            <person name="Newman L."/>
            <person name="Monchy S."/>
        </authorList>
    </citation>
    <scope>NUCLEOTIDE SEQUENCE [LARGE SCALE GENOMIC DNA]</scope>
    <source>
        <strain>638</strain>
    </source>
</reference>
<comment type="function">
    <text evidence="1">Component of the sulfite reductase complex that catalyzes the 6-electron reduction of sulfite to sulfide. This is one of several activities required for the biosynthesis of L-cysteine from sulfate.</text>
</comment>
<comment type="catalytic activity">
    <reaction evidence="1">
        <text>hydrogen sulfide + 3 NADP(+) + 3 H2O = sulfite + 3 NADPH + 4 H(+)</text>
        <dbReference type="Rhea" id="RHEA:13801"/>
        <dbReference type="ChEBI" id="CHEBI:15377"/>
        <dbReference type="ChEBI" id="CHEBI:15378"/>
        <dbReference type="ChEBI" id="CHEBI:17359"/>
        <dbReference type="ChEBI" id="CHEBI:29919"/>
        <dbReference type="ChEBI" id="CHEBI:57783"/>
        <dbReference type="ChEBI" id="CHEBI:58349"/>
        <dbReference type="EC" id="1.8.1.2"/>
    </reaction>
</comment>
<comment type="cofactor">
    <cofactor evidence="1">
        <name>siroheme</name>
        <dbReference type="ChEBI" id="CHEBI:60052"/>
    </cofactor>
    <text evidence="1">Binds 1 siroheme per subunit.</text>
</comment>
<comment type="cofactor">
    <cofactor evidence="1">
        <name>[4Fe-4S] cluster</name>
        <dbReference type="ChEBI" id="CHEBI:49883"/>
    </cofactor>
    <text evidence="1">Binds 1 [4Fe-4S] cluster per subunit.</text>
</comment>
<comment type="pathway">
    <text evidence="1">Sulfur metabolism; hydrogen sulfide biosynthesis; hydrogen sulfide from sulfite (NADPH route): step 1/1.</text>
</comment>
<comment type="subunit">
    <text evidence="1">Alpha(8)-beta(8). The alpha component is a flavoprotein, the beta component is a hemoprotein.</text>
</comment>
<comment type="similarity">
    <text evidence="1">Belongs to the nitrite and sulfite reductase 4Fe-4S domain family.</text>
</comment>
<accession>A4WDW0</accession>
<gene>
    <name evidence="1" type="primary">cysI</name>
    <name type="ordered locus">Ent638_3226</name>
</gene>
<protein>
    <recommendedName>
        <fullName evidence="1">Sulfite reductase [NADPH] hemoprotein beta-component</fullName>
        <shortName evidence="1">SiR-HP</shortName>
        <shortName evidence="1">SiRHP</shortName>
        <ecNumber evidence="1">1.8.1.2</ecNumber>
    </recommendedName>
</protein>
<name>CYSI_ENT38</name>
<evidence type="ECO:0000255" key="1">
    <source>
        <dbReference type="HAMAP-Rule" id="MF_01540"/>
    </source>
</evidence>
<organism>
    <name type="scientific">Enterobacter sp. (strain 638)</name>
    <dbReference type="NCBI Taxonomy" id="399742"/>
    <lineage>
        <taxon>Bacteria</taxon>
        <taxon>Pseudomonadati</taxon>
        <taxon>Pseudomonadota</taxon>
        <taxon>Gammaproteobacteria</taxon>
        <taxon>Enterobacterales</taxon>
        <taxon>Enterobacteriaceae</taxon>
        <taxon>Enterobacter</taxon>
    </lineage>
</organism>